<comment type="function">
    <text evidence="1">Catalyzes the ATP-dependent phosphorylation of L-homoserine to L-homoserine phosphate.</text>
</comment>
<comment type="catalytic activity">
    <reaction evidence="1">
        <text>L-homoserine + ATP = O-phospho-L-homoserine + ADP + H(+)</text>
        <dbReference type="Rhea" id="RHEA:13985"/>
        <dbReference type="ChEBI" id="CHEBI:15378"/>
        <dbReference type="ChEBI" id="CHEBI:30616"/>
        <dbReference type="ChEBI" id="CHEBI:57476"/>
        <dbReference type="ChEBI" id="CHEBI:57590"/>
        <dbReference type="ChEBI" id="CHEBI:456216"/>
        <dbReference type="EC" id="2.7.1.39"/>
    </reaction>
</comment>
<comment type="pathway">
    <text evidence="1">Amino-acid biosynthesis; L-threonine biosynthesis; L-threonine from L-aspartate: step 4/5.</text>
</comment>
<comment type="subcellular location">
    <subcellularLocation>
        <location evidence="1">Cytoplasm</location>
    </subcellularLocation>
</comment>
<comment type="similarity">
    <text evidence="1">Belongs to the GHMP kinase family. Homoserine kinase subfamily.</text>
</comment>
<dbReference type="EC" id="2.7.1.39" evidence="1"/>
<dbReference type="EMBL" id="AP009044">
    <property type="protein sequence ID" value="BAF54242.1"/>
    <property type="molecule type" value="Genomic_DNA"/>
</dbReference>
<dbReference type="RefSeq" id="WP_003854896.1">
    <property type="nucleotide sequence ID" value="NC_009342.1"/>
</dbReference>
<dbReference type="SMR" id="A4QDE5"/>
<dbReference type="KEGG" id="cgt:cgR_1263"/>
<dbReference type="HOGENOM" id="CLU_041243_0_1_11"/>
<dbReference type="PhylomeDB" id="A4QDE5"/>
<dbReference type="UniPathway" id="UPA00050">
    <property type="reaction ID" value="UER00064"/>
</dbReference>
<dbReference type="Proteomes" id="UP000006698">
    <property type="component" value="Chromosome"/>
</dbReference>
<dbReference type="GO" id="GO:0005737">
    <property type="term" value="C:cytoplasm"/>
    <property type="evidence" value="ECO:0007669"/>
    <property type="project" value="UniProtKB-SubCell"/>
</dbReference>
<dbReference type="GO" id="GO:0005524">
    <property type="term" value="F:ATP binding"/>
    <property type="evidence" value="ECO:0007669"/>
    <property type="project" value="UniProtKB-UniRule"/>
</dbReference>
<dbReference type="GO" id="GO:0004413">
    <property type="term" value="F:homoserine kinase activity"/>
    <property type="evidence" value="ECO:0007669"/>
    <property type="project" value="UniProtKB-UniRule"/>
</dbReference>
<dbReference type="GO" id="GO:0009088">
    <property type="term" value="P:threonine biosynthetic process"/>
    <property type="evidence" value="ECO:0007669"/>
    <property type="project" value="UniProtKB-UniRule"/>
</dbReference>
<dbReference type="Gene3D" id="3.30.230.10">
    <property type="match status" value="1"/>
</dbReference>
<dbReference type="Gene3D" id="3.30.70.890">
    <property type="entry name" value="GHMP kinase, C-terminal domain"/>
    <property type="match status" value="1"/>
</dbReference>
<dbReference type="HAMAP" id="MF_00384">
    <property type="entry name" value="Homoser_kinase"/>
    <property type="match status" value="1"/>
</dbReference>
<dbReference type="InterPro" id="IPR013750">
    <property type="entry name" value="GHMP_kinase_C_dom"/>
</dbReference>
<dbReference type="InterPro" id="IPR036554">
    <property type="entry name" value="GHMP_kinase_C_sf"/>
</dbReference>
<dbReference type="InterPro" id="IPR006204">
    <property type="entry name" value="GHMP_kinase_N_dom"/>
</dbReference>
<dbReference type="InterPro" id="IPR006203">
    <property type="entry name" value="GHMP_knse_ATP-bd_CS"/>
</dbReference>
<dbReference type="InterPro" id="IPR000870">
    <property type="entry name" value="Homoserine_kinase"/>
</dbReference>
<dbReference type="InterPro" id="IPR020568">
    <property type="entry name" value="Ribosomal_Su5_D2-typ_SF"/>
</dbReference>
<dbReference type="InterPro" id="IPR014721">
    <property type="entry name" value="Ribsml_uS5_D2-typ_fold_subgr"/>
</dbReference>
<dbReference type="NCBIfam" id="TIGR00191">
    <property type="entry name" value="thrB"/>
    <property type="match status" value="1"/>
</dbReference>
<dbReference type="PANTHER" id="PTHR20861:SF1">
    <property type="entry name" value="HOMOSERINE KINASE"/>
    <property type="match status" value="1"/>
</dbReference>
<dbReference type="PANTHER" id="PTHR20861">
    <property type="entry name" value="HOMOSERINE/4-DIPHOSPHOCYTIDYL-2-C-METHYL-D-ERYTHRITOL KINASE"/>
    <property type="match status" value="1"/>
</dbReference>
<dbReference type="Pfam" id="PF08544">
    <property type="entry name" value="GHMP_kinases_C"/>
    <property type="match status" value="1"/>
</dbReference>
<dbReference type="Pfam" id="PF00288">
    <property type="entry name" value="GHMP_kinases_N"/>
    <property type="match status" value="1"/>
</dbReference>
<dbReference type="PIRSF" id="PIRSF000676">
    <property type="entry name" value="Homoser_kin"/>
    <property type="match status" value="1"/>
</dbReference>
<dbReference type="PRINTS" id="PR00958">
    <property type="entry name" value="HOMSERKINASE"/>
</dbReference>
<dbReference type="SUPFAM" id="SSF55060">
    <property type="entry name" value="GHMP Kinase, C-terminal domain"/>
    <property type="match status" value="1"/>
</dbReference>
<dbReference type="SUPFAM" id="SSF54211">
    <property type="entry name" value="Ribosomal protein S5 domain 2-like"/>
    <property type="match status" value="1"/>
</dbReference>
<dbReference type="PROSITE" id="PS00627">
    <property type="entry name" value="GHMP_KINASES_ATP"/>
    <property type="match status" value="1"/>
</dbReference>
<protein>
    <recommendedName>
        <fullName evidence="1">Homoserine kinase</fullName>
        <shortName evidence="1">HK</shortName>
        <shortName evidence="1">HSK</shortName>
        <ecNumber evidence="1">2.7.1.39</ecNumber>
    </recommendedName>
</protein>
<keyword id="KW-0028">Amino-acid biosynthesis</keyword>
<keyword id="KW-0067">ATP-binding</keyword>
<keyword id="KW-0963">Cytoplasm</keyword>
<keyword id="KW-0418">Kinase</keyword>
<keyword id="KW-0547">Nucleotide-binding</keyword>
<keyword id="KW-0791">Threonine biosynthesis</keyword>
<keyword id="KW-0808">Transferase</keyword>
<accession>A4QDE5</accession>
<gene>
    <name evidence="1" type="primary">thrB</name>
    <name type="ordered locus">cgR_1263</name>
</gene>
<feature type="chain" id="PRO_1000049126" description="Homoserine kinase">
    <location>
        <begin position="1"/>
        <end position="309"/>
    </location>
</feature>
<feature type="binding site" evidence="1">
    <location>
        <begin position="95"/>
        <end position="105"/>
    </location>
    <ligand>
        <name>ATP</name>
        <dbReference type="ChEBI" id="CHEBI:30616"/>
    </ligand>
</feature>
<reference key="1">
    <citation type="journal article" date="2007" name="Microbiology">
        <title>Comparative analysis of the Corynebacterium glutamicum group and complete genome sequence of strain R.</title>
        <authorList>
            <person name="Yukawa H."/>
            <person name="Omumasaba C.A."/>
            <person name="Nonaka H."/>
            <person name="Kos P."/>
            <person name="Okai N."/>
            <person name="Suzuki N."/>
            <person name="Suda M."/>
            <person name="Tsuge Y."/>
            <person name="Watanabe J."/>
            <person name="Ikeda Y."/>
            <person name="Vertes A.A."/>
            <person name="Inui M."/>
        </authorList>
    </citation>
    <scope>NUCLEOTIDE SEQUENCE [LARGE SCALE GENOMIC DNA]</scope>
    <source>
        <strain>R</strain>
    </source>
</reference>
<evidence type="ECO:0000255" key="1">
    <source>
        <dbReference type="HAMAP-Rule" id="MF_00384"/>
    </source>
</evidence>
<organism>
    <name type="scientific">Corynebacterium glutamicum (strain R)</name>
    <dbReference type="NCBI Taxonomy" id="340322"/>
    <lineage>
        <taxon>Bacteria</taxon>
        <taxon>Bacillati</taxon>
        <taxon>Actinomycetota</taxon>
        <taxon>Actinomycetes</taxon>
        <taxon>Mycobacteriales</taxon>
        <taxon>Corynebacteriaceae</taxon>
        <taxon>Corynebacterium</taxon>
    </lineage>
</organism>
<name>KHSE_CORGB</name>
<proteinExistence type="inferred from homology"/>
<sequence length="309" mass="32606">MAIELNVGRKVTVTVPGSSANLGPGFDTLGLALSVYDTVEVEIIPSGLEVEVFGEGQGEVPLDGSHLVVKAIRAGLKAADAEVPGLRVVCHNNIPQSRGLGSSAAAAVAGVAAANGLADFPLTQEQIVQLSSAFEGHPDNAAASVLGGAVVSWTNLSIDGKSQPQYAAVPLEVQDNIRATALVPNFHASTEAVRRVLPTEVTHIDARFNVSRVAVMIVALQQRPDLLWEGTRDRLHQPYRAEVLPVTSEWVNRLRNRGYAAYLSGAGPTAMVLSTEPIPDKVLEDARESGIKVLELEVAGPVKVEVNQP</sequence>